<accession>B8FYW5</accession>
<sequence length="297" mass="33182">MLSKQVRLLVITGLSGAGKTQALQSLEDQGYFCVDNLPPSLILKFAELCTQSQGKVTRAAIVCDLRGGEFFSSLAEALGDLHREGFHYEILFLEASDEVLVGRYKESRRRHPLSPSGGILEGIQMERQMLTELRGVAHKIMDTSNLSSQQLRHQVAESFGNEQASGHLAVSVVSFGFKYAIPLDVDLLIDVRFLPNPFYVAELRPLTGEHPQVQDYIFSNPVAQEFVDKYLGLLEFILPYYVKEGKRHLVIGVGCTGGQHRSVAIAERIGLFLQERSYMMSVKHRDAARNRKGDKSK</sequence>
<evidence type="ECO:0000255" key="1">
    <source>
        <dbReference type="HAMAP-Rule" id="MF_00636"/>
    </source>
</evidence>
<comment type="function">
    <text evidence="1">Displays ATPase and GTPase activities.</text>
</comment>
<comment type="similarity">
    <text evidence="1">Belongs to the RapZ-like family.</text>
</comment>
<proteinExistence type="inferred from homology"/>
<organism>
    <name type="scientific">Desulfitobacterium hafniense (strain DSM 10664 / DCB-2)</name>
    <dbReference type="NCBI Taxonomy" id="272564"/>
    <lineage>
        <taxon>Bacteria</taxon>
        <taxon>Bacillati</taxon>
        <taxon>Bacillota</taxon>
        <taxon>Clostridia</taxon>
        <taxon>Eubacteriales</taxon>
        <taxon>Desulfitobacteriaceae</taxon>
        <taxon>Desulfitobacterium</taxon>
    </lineage>
</organism>
<gene>
    <name type="ordered locus">Dhaf_4722</name>
</gene>
<protein>
    <recommendedName>
        <fullName evidence="1">Nucleotide-binding protein Dhaf_4722</fullName>
    </recommendedName>
</protein>
<keyword id="KW-0067">ATP-binding</keyword>
<keyword id="KW-0342">GTP-binding</keyword>
<keyword id="KW-0547">Nucleotide-binding</keyword>
<dbReference type="EMBL" id="CP001336">
    <property type="protein sequence ID" value="ACL22717.1"/>
    <property type="molecule type" value="Genomic_DNA"/>
</dbReference>
<dbReference type="SMR" id="B8FYW5"/>
<dbReference type="KEGG" id="dhd:Dhaf_4722"/>
<dbReference type="HOGENOM" id="CLU_059558_0_0_9"/>
<dbReference type="Proteomes" id="UP000007726">
    <property type="component" value="Chromosome"/>
</dbReference>
<dbReference type="GO" id="GO:0005524">
    <property type="term" value="F:ATP binding"/>
    <property type="evidence" value="ECO:0007669"/>
    <property type="project" value="UniProtKB-UniRule"/>
</dbReference>
<dbReference type="GO" id="GO:0005525">
    <property type="term" value="F:GTP binding"/>
    <property type="evidence" value="ECO:0007669"/>
    <property type="project" value="UniProtKB-UniRule"/>
</dbReference>
<dbReference type="HAMAP" id="MF_00636">
    <property type="entry name" value="RapZ_like"/>
    <property type="match status" value="1"/>
</dbReference>
<dbReference type="InterPro" id="IPR027417">
    <property type="entry name" value="P-loop_NTPase"/>
</dbReference>
<dbReference type="InterPro" id="IPR005337">
    <property type="entry name" value="RapZ-like"/>
</dbReference>
<dbReference type="InterPro" id="IPR053930">
    <property type="entry name" value="RapZ-like_N"/>
</dbReference>
<dbReference type="InterPro" id="IPR053931">
    <property type="entry name" value="RapZ_C"/>
</dbReference>
<dbReference type="NCBIfam" id="NF003828">
    <property type="entry name" value="PRK05416.1"/>
    <property type="match status" value="1"/>
</dbReference>
<dbReference type="PANTHER" id="PTHR30448">
    <property type="entry name" value="RNASE ADAPTER PROTEIN RAPZ"/>
    <property type="match status" value="1"/>
</dbReference>
<dbReference type="PANTHER" id="PTHR30448:SF0">
    <property type="entry name" value="RNASE ADAPTER PROTEIN RAPZ"/>
    <property type="match status" value="1"/>
</dbReference>
<dbReference type="Pfam" id="PF22740">
    <property type="entry name" value="PapZ_C"/>
    <property type="match status" value="1"/>
</dbReference>
<dbReference type="Pfam" id="PF03668">
    <property type="entry name" value="RapZ-like_N"/>
    <property type="match status" value="1"/>
</dbReference>
<dbReference type="PIRSF" id="PIRSF005052">
    <property type="entry name" value="P-loopkin"/>
    <property type="match status" value="1"/>
</dbReference>
<dbReference type="SUPFAM" id="SSF52540">
    <property type="entry name" value="P-loop containing nucleoside triphosphate hydrolases"/>
    <property type="match status" value="1"/>
</dbReference>
<name>Y4722_DESHD</name>
<reference key="1">
    <citation type="journal article" date="2012" name="BMC Microbiol.">
        <title>Genome sequence of Desulfitobacterium hafniense DCB-2, a Gram-positive anaerobe capable of dehalogenation and metal reduction.</title>
        <authorList>
            <person name="Kim S.H."/>
            <person name="Harzman C."/>
            <person name="Davis J.K."/>
            <person name="Hutcheson R."/>
            <person name="Broderick J.B."/>
            <person name="Marsh T.L."/>
            <person name="Tiedje J.M."/>
        </authorList>
    </citation>
    <scope>NUCLEOTIDE SEQUENCE [LARGE SCALE GENOMIC DNA]</scope>
    <source>
        <strain>DSM 10664 / DCB-2</strain>
    </source>
</reference>
<feature type="chain" id="PRO_1000147357" description="Nucleotide-binding protein Dhaf_4722">
    <location>
        <begin position="1"/>
        <end position="297"/>
    </location>
</feature>
<feature type="binding site" evidence="1">
    <location>
        <begin position="13"/>
        <end position="20"/>
    </location>
    <ligand>
        <name>ATP</name>
        <dbReference type="ChEBI" id="CHEBI:30616"/>
    </ligand>
</feature>
<feature type="binding site" evidence="1">
    <location>
        <begin position="64"/>
        <end position="67"/>
    </location>
    <ligand>
        <name>GTP</name>
        <dbReference type="ChEBI" id="CHEBI:37565"/>
    </ligand>
</feature>